<feature type="chain" id="PRO_1000213195" description="tRNA/tmRNA (uracil-C(5))-methyltransferase">
    <location>
        <begin position="1"/>
        <end position="361"/>
    </location>
</feature>
<feature type="active site" description="Nucleophile" evidence="1">
    <location>
        <position position="319"/>
    </location>
</feature>
<feature type="active site" description="Proton acceptor" evidence="1">
    <location>
        <position position="353"/>
    </location>
</feature>
<feature type="binding site" evidence="1">
    <location>
        <position position="185"/>
    </location>
    <ligand>
        <name>S-adenosyl-L-methionine</name>
        <dbReference type="ChEBI" id="CHEBI:59789"/>
    </ligand>
</feature>
<feature type="binding site" evidence="1">
    <location>
        <position position="213"/>
    </location>
    <ligand>
        <name>S-adenosyl-L-methionine</name>
        <dbReference type="ChEBI" id="CHEBI:59789"/>
    </ligand>
</feature>
<feature type="binding site" evidence="1">
    <location>
        <position position="218"/>
    </location>
    <ligand>
        <name>S-adenosyl-L-methionine</name>
        <dbReference type="ChEBI" id="CHEBI:59789"/>
    </ligand>
</feature>
<feature type="binding site" evidence="1">
    <location>
        <position position="234"/>
    </location>
    <ligand>
        <name>S-adenosyl-L-methionine</name>
        <dbReference type="ChEBI" id="CHEBI:59789"/>
    </ligand>
</feature>
<feature type="binding site" evidence="1">
    <location>
        <position position="294"/>
    </location>
    <ligand>
        <name>S-adenosyl-L-methionine</name>
        <dbReference type="ChEBI" id="CHEBI:59789"/>
    </ligand>
</feature>
<sequence length="361" mass="41012">MSLPHFDPSHYDAQLADKQARLSGLLAPFAAPEPEVFDSPREHYRLRAEFRLWREGEARHYAMFDPGDKRKPILLDDFPIASERINDLMPRLKAAWENAALGFKLFQVEFLTTLAGDALITLCYHRPLDTFWQTAAERLAAELGVSIVGRSRGQRLVVGRDYVEEELEVAGRRFRYRQPEGAFTQPNGVVCRKMLNWAHDVLGERDDDLLELYCGNGNFTLPLATRVRRVLATEISKTSVNAALTNLESNGVDNVTLVRLSAEELTQALNEVRPFRRLAGVDLKGYDFGSLFVDPPRAGMDPDTCELARRFGRILYISCNPETLAANIARLHDTHRVVRCALFDQFPYTHHMESGVLLERR</sequence>
<proteinExistence type="inferred from homology"/>
<name>TRMA_AZOVD</name>
<gene>
    <name evidence="1" type="primary">trmA</name>
    <name type="ordered locus">Avin_07800</name>
</gene>
<protein>
    <recommendedName>
        <fullName evidence="1">tRNA/tmRNA (uracil-C(5))-methyltransferase</fullName>
        <ecNumber evidence="1">2.1.1.-</ecNumber>
        <ecNumber evidence="1">2.1.1.35</ecNumber>
    </recommendedName>
    <alternativeName>
        <fullName evidence="1">tRNA (uracil(54)-C(5))-methyltransferase</fullName>
    </alternativeName>
    <alternativeName>
        <fullName evidence="1">tRNA(m5U54)-methyltransferase</fullName>
        <shortName evidence="1">RUMT</shortName>
    </alternativeName>
    <alternativeName>
        <fullName evidence="1">tmRNA (uracil(341)-C(5))-methyltransferase</fullName>
    </alternativeName>
</protein>
<evidence type="ECO:0000255" key="1">
    <source>
        <dbReference type="HAMAP-Rule" id="MF_01011"/>
    </source>
</evidence>
<comment type="function">
    <text evidence="1">Dual-specificity methyltransferase that catalyzes the formation of 5-methyluridine at position 54 (m5U54) in all tRNAs, and that of position 341 (m5U341) in tmRNA (transfer-mRNA).</text>
</comment>
<comment type="catalytic activity">
    <reaction evidence="1">
        <text>uridine(54) in tRNA + S-adenosyl-L-methionine = 5-methyluridine(54) in tRNA + S-adenosyl-L-homocysteine + H(+)</text>
        <dbReference type="Rhea" id="RHEA:42712"/>
        <dbReference type="Rhea" id="RHEA-COMP:10167"/>
        <dbReference type="Rhea" id="RHEA-COMP:10193"/>
        <dbReference type="ChEBI" id="CHEBI:15378"/>
        <dbReference type="ChEBI" id="CHEBI:57856"/>
        <dbReference type="ChEBI" id="CHEBI:59789"/>
        <dbReference type="ChEBI" id="CHEBI:65315"/>
        <dbReference type="ChEBI" id="CHEBI:74447"/>
        <dbReference type="EC" id="2.1.1.35"/>
    </reaction>
</comment>
<comment type="catalytic activity">
    <reaction evidence="1">
        <text>uridine(341) in tmRNA + S-adenosyl-L-methionine = 5-methyluridine(341) in tmRNA + S-adenosyl-L-homocysteine + H(+)</text>
        <dbReference type="Rhea" id="RHEA:43612"/>
        <dbReference type="Rhea" id="RHEA-COMP:10630"/>
        <dbReference type="Rhea" id="RHEA-COMP:10631"/>
        <dbReference type="ChEBI" id="CHEBI:15378"/>
        <dbReference type="ChEBI" id="CHEBI:57856"/>
        <dbReference type="ChEBI" id="CHEBI:59789"/>
        <dbReference type="ChEBI" id="CHEBI:65315"/>
        <dbReference type="ChEBI" id="CHEBI:74447"/>
    </reaction>
</comment>
<comment type="similarity">
    <text evidence="1">Belongs to the class I-like SAM-binding methyltransferase superfamily. RNA M5U methyltransferase family. TrmA subfamily.</text>
</comment>
<accession>C1DLS8</accession>
<dbReference type="EC" id="2.1.1.-" evidence="1"/>
<dbReference type="EC" id="2.1.1.35" evidence="1"/>
<dbReference type="EMBL" id="CP001157">
    <property type="protein sequence ID" value="ACO77026.1"/>
    <property type="molecule type" value="Genomic_DNA"/>
</dbReference>
<dbReference type="RefSeq" id="WP_012699451.1">
    <property type="nucleotide sequence ID" value="NC_012560.1"/>
</dbReference>
<dbReference type="SMR" id="C1DLS8"/>
<dbReference type="STRING" id="322710.Avin_07800"/>
<dbReference type="EnsemblBacteria" id="ACO77026">
    <property type="protein sequence ID" value="ACO77026"/>
    <property type="gene ID" value="Avin_07800"/>
</dbReference>
<dbReference type="GeneID" id="88184175"/>
<dbReference type="KEGG" id="avn:Avin_07800"/>
<dbReference type="eggNOG" id="COG2265">
    <property type="taxonomic scope" value="Bacteria"/>
</dbReference>
<dbReference type="HOGENOM" id="CLU_043022_0_0_6"/>
<dbReference type="OrthoDB" id="9804590at2"/>
<dbReference type="Proteomes" id="UP000002424">
    <property type="component" value="Chromosome"/>
</dbReference>
<dbReference type="GO" id="GO:0005829">
    <property type="term" value="C:cytosol"/>
    <property type="evidence" value="ECO:0007669"/>
    <property type="project" value="TreeGrafter"/>
</dbReference>
<dbReference type="GO" id="GO:0019843">
    <property type="term" value="F:rRNA binding"/>
    <property type="evidence" value="ECO:0007669"/>
    <property type="project" value="TreeGrafter"/>
</dbReference>
<dbReference type="GO" id="GO:0030697">
    <property type="term" value="F:tRNA (uracil(54)-C5)-methyltransferase activity, S-adenosyl methionine-dependent"/>
    <property type="evidence" value="ECO:0007669"/>
    <property type="project" value="UniProtKB-UniRule"/>
</dbReference>
<dbReference type="GO" id="GO:0000049">
    <property type="term" value="F:tRNA binding"/>
    <property type="evidence" value="ECO:0007669"/>
    <property type="project" value="TreeGrafter"/>
</dbReference>
<dbReference type="GO" id="GO:0030488">
    <property type="term" value="P:tRNA methylation"/>
    <property type="evidence" value="ECO:0007669"/>
    <property type="project" value="UniProtKB-UniRule"/>
</dbReference>
<dbReference type="CDD" id="cd02440">
    <property type="entry name" value="AdoMet_MTases"/>
    <property type="match status" value="1"/>
</dbReference>
<dbReference type="FunFam" id="2.40.50.1070:FF:000001">
    <property type="entry name" value="tRNA/tmRNA (uracil-C(5))-methyltransferase"/>
    <property type="match status" value="1"/>
</dbReference>
<dbReference type="FunFam" id="3.40.50.150:FF:000012">
    <property type="entry name" value="tRNA/tmRNA (uracil-C(5))-methyltransferase"/>
    <property type="match status" value="1"/>
</dbReference>
<dbReference type="Gene3D" id="2.40.50.1070">
    <property type="match status" value="1"/>
</dbReference>
<dbReference type="Gene3D" id="3.40.50.150">
    <property type="entry name" value="Vaccinia Virus protein VP39"/>
    <property type="match status" value="1"/>
</dbReference>
<dbReference type="HAMAP" id="MF_01011">
    <property type="entry name" value="RNA_methyltr_TrmA"/>
    <property type="match status" value="1"/>
</dbReference>
<dbReference type="InterPro" id="IPR030390">
    <property type="entry name" value="MeTrfase_TrmA_AS"/>
</dbReference>
<dbReference type="InterPro" id="IPR030391">
    <property type="entry name" value="MeTrfase_TrmA_CS"/>
</dbReference>
<dbReference type="InterPro" id="IPR029063">
    <property type="entry name" value="SAM-dependent_MTases_sf"/>
</dbReference>
<dbReference type="InterPro" id="IPR011869">
    <property type="entry name" value="TrmA_MeTrfase"/>
</dbReference>
<dbReference type="InterPro" id="IPR010280">
    <property type="entry name" value="U5_MeTrfase_fam"/>
</dbReference>
<dbReference type="NCBIfam" id="TIGR02143">
    <property type="entry name" value="trmA_only"/>
    <property type="match status" value="1"/>
</dbReference>
<dbReference type="PANTHER" id="PTHR47790">
    <property type="entry name" value="TRNA/TMRNA (URACIL-C(5))-METHYLTRANSFERASE"/>
    <property type="match status" value="1"/>
</dbReference>
<dbReference type="PANTHER" id="PTHR47790:SF2">
    <property type="entry name" value="TRNA_TMRNA (URACIL-C(5))-METHYLTRANSFERASE"/>
    <property type="match status" value="1"/>
</dbReference>
<dbReference type="Pfam" id="PF05958">
    <property type="entry name" value="tRNA_U5-meth_tr"/>
    <property type="match status" value="1"/>
</dbReference>
<dbReference type="SUPFAM" id="SSF53335">
    <property type="entry name" value="S-adenosyl-L-methionine-dependent methyltransferases"/>
    <property type="match status" value="1"/>
</dbReference>
<dbReference type="PROSITE" id="PS51687">
    <property type="entry name" value="SAM_MT_RNA_M5U"/>
    <property type="match status" value="1"/>
</dbReference>
<dbReference type="PROSITE" id="PS01230">
    <property type="entry name" value="TRMA_1"/>
    <property type="match status" value="1"/>
</dbReference>
<dbReference type="PROSITE" id="PS01231">
    <property type="entry name" value="TRMA_2"/>
    <property type="match status" value="1"/>
</dbReference>
<keyword id="KW-0489">Methyltransferase</keyword>
<keyword id="KW-0949">S-adenosyl-L-methionine</keyword>
<keyword id="KW-0808">Transferase</keyword>
<keyword id="KW-0819">tRNA processing</keyword>
<organism>
    <name type="scientific">Azotobacter vinelandii (strain DJ / ATCC BAA-1303)</name>
    <dbReference type="NCBI Taxonomy" id="322710"/>
    <lineage>
        <taxon>Bacteria</taxon>
        <taxon>Pseudomonadati</taxon>
        <taxon>Pseudomonadota</taxon>
        <taxon>Gammaproteobacteria</taxon>
        <taxon>Pseudomonadales</taxon>
        <taxon>Pseudomonadaceae</taxon>
        <taxon>Azotobacter</taxon>
    </lineage>
</organism>
<reference key="1">
    <citation type="journal article" date="2009" name="J. Bacteriol.">
        <title>Genome sequence of Azotobacter vinelandii, an obligate aerobe specialized to support diverse anaerobic metabolic processes.</title>
        <authorList>
            <person name="Setubal J.C."/>
            <person name="Dos Santos P."/>
            <person name="Goldman B.S."/>
            <person name="Ertesvaag H."/>
            <person name="Espin G."/>
            <person name="Rubio L.M."/>
            <person name="Valla S."/>
            <person name="Almeida N.F."/>
            <person name="Balasubramanian D."/>
            <person name="Cromes L."/>
            <person name="Curatti L."/>
            <person name="Du Z."/>
            <person name="Godsy E."/>
            <person name="Goodner B."/>
            <person name="Hellner-Burris K."/>
            <person name="Hernandez J.A."/>
            <person name="Houmiel K."/>
            <person name="Imperial J."/>
            <person name="Kennedy C."/>
            <person name="Larson T.J."/>
            <person name="Latreille P."/>
            <person name="Ligon L.S."/>
            <person name="Lu J."/>
            <person name="Maerk M."/>
            <person name="Miller N.M."/>
            <person name="Norton S."/>
            <person name="O'Carroll I.P."/>
            <person name="Paulsen I."/>
            <person name="Raulfs E.C."/>
            <person name="Roemer R."/>
            <person name="Rosser J."/>
            <person name="Segura D."/>
            <person name="Slater S."/>
            <person name="Stricklin S.L."/>
            <person name="Studholme D.J."/>
            <person name="Sun J."/>
            <person name="Viana C.J."/>
            <person name="Wallin E."/>
            <person name="Wang B."/>
            <person name="Wheeler C."/>
            <person name="Zhu H."/>
            <person name="Dean D.R."/>
            <person name="Dixon R."/>
            <person name="Wood D."/>
        </authorList>
    </citation>
    <scope>NUCLEOTIDE SEQUENCE [LARGE SCALE GENOMIC DNA]</scope>
    <source>
        <strain>DJ / ATCC BAA-1303</strain>
    </source>
</reference>